<name>COQ7_LEGPL</name>
<sequence>MRTSSFLDRLIGEVDSALRTLVLPQKRITTRQSPAENLADTVLSAQEKKHISGLMRVNHAGEVCAQALYQGQALTARLTHIKEQMASAAAEEVDHLAWCEERLYELGSKPSLLNPIWYCGSVLLGALAGLAGDKVSLGFVAETERQVTAHLQRHLHYLPEKDKKTIAILKRMQEDEEHHAHTAMEAGAVELPYIIKQLMNAVSKLMTQSSYYI</sequence>
<evidence type="ECO:0000255" key="1">
    <source>
        <dbReference type="HAMAP-Rule" id="MF_01658"/>
    </source>
</evidence>
<gene>
    <name evidence="1" type="primary">coq7</name>
    <name type="ordered locus">lpl0029</name>
</gene>
<keyword id="KW-1003">Cell membrane</keyword>
<keyword id="KW-0408">Iron</keyword>
<keyword id="KW-0472">Membrane</keyword>
<keyword id="KW-0479">Metal-binding</keyword>
<keyword id="KW-0503">Monooxygenase</keyword>
<keyword id="KW-0560">Oxidoreductase</keyword>
<keyword id="KW-0831">Ubiquinone biosynthesis</keyword>
<accession>Q5X0J0</accession>
<reference key="1">
    <citation type="journal article" date="2004" name="Nat. Genet.">
        <title>Evidence in the Legionella pneumophila genome for exploitation of host cell functions and high genome plasticity.</title>
        <authorList>
            <person name="Cazalet C."/>
            <person name="Rusniok C."/>
            <person name="Brueggemann H."/>
            <person name="Zidane N."/>
            <person name="Magnier A."/>
            <person name="Ma L."/>
            <person name="Tichit M."/>
            <person name="Jarraud S."/>
            <person name="Bouchier C."/>
            <person name="Vandenesch F."/>
            <person name="Kunst F."/>
            <person name="Etienne J."/>
            <person name="Glaser P."/>
            <person name="Buchrieser C."/>
        </authorList>
    </citation>
    <scope>NUCLEOTIDE SEQUENCE [LARGE SCALE GENOMIC DNA]</scope>
    <source>
        <strain>Lens</strain>
    </source>
</reference>
<organism>
    <name type="scientific">Legionella pneumophila (strain Lens)</name>
    <dbReference type="NCBI Taxonomy" id="297245"/>
    <lineage>
        <taxon>Bacteria</taxon>
        <taxon>Pseudomonadati</taxon>
        <taxon>Pseudomonadota</taxon>
        <taxon>Gammaproteobacteria</taxon>
        <taxon>Legionellales</taxon>
        <taxon>Legionellaceae</taxon>
        <taxon>Legionella</taxon>
    </lineage>
</organism>
<feature type="chain" id="PRO_0000338695" description="3-demethoxyubiquinol 3-hydroxylase">
    <location>
        <begin position="1"/>
        <end position="213"/>
    </location>
</feature>
<feature type="binding site" evidence="1">
    <location>
        <position position="62"/>
    </location>
    <ligand>
        <name>Fe cation</name>
        <dbReference type="ChEBI" id="CHEBI:24875"/>
        <label>1</label>
    </ligand>
</feature>
<feature type="binding site" evidence="1">
    <location>
        <position position="92"/>
    </location>
    <ligand>
        <name>Fe cation</name>
        <dbReference type="ChEBI" id="CHEBI:24875"/>
        <label>1</label>
    </ligand>
</feature>
<feature type="binding site" evidence="1">
    <location>
        <position position="92"/>
    </location>
    <ligand>
        <name>Fe cation</name>
        <dbReference type="ChEBI" id="CHEBI:24875"/>
        <label>2</label>
    </ligand>
</feature>
<feature type="binding site" evidence="1">
    <location>
        <position position="95"/>
    </location>
    <ligand>
        <name>Fe cation</name>
        <dbReference type="ChEBI" id="CHEBI:24875"/>
        <label>1</label>
    </ligand>
</feature>
<feature type="binding site" evidence="1">
    <location>
        <position position="144"/>
    </location>
    <ligand>
        <name>Fe cation</name>
        <dbReference type="ChEBI" id="CHEBI:24875"/>
        <label>2</label>
    </ligand>
</feature>
<feature type="binding site" evidence="1">
    <location>
        <position position="176"/>
    </location>
    <ligand>
        <name>Fe cation</name>
        <dbReference type="ChEBI" id="CHEBI:24875"/>
        <label>1</label>
    </ligand>
</feature>
<feature type="binding site" evidence="1">
    <location>
        <position position="176"/>
    </location>
    <ligand>
        <name>Fe cation</name>
        <dbReference type="ChEBI" id="CHEBI:24875"/>
        <label>2</label>
    </ligand>
</feature>
<feature type="binding site" evidence="1">
    <location>
        <position position="179"/>
    </location>
    <ligand>
        <name>Fe cation</name>
        <dbReference type="ChEBI" id="CHEBI:24875"/>
        <label>2</label>
    </ligand>
</feature>
<proteinExistence type="inferred from homology"/>
<protein>
    <recommendedName>
        <fullName evidence="1">3-demethoxyubiquinol 3-hydroxylase</fullName>
        <shortName evidence="1">DMQ hydroxylase</shortName>
        <ecNumber evidence="1">1.14.99.60</ecNumber>
    </recommendedName>
    <alternativeName>
        <fullName evidence="1">2-nonaprenyl-3-methyl-6-methoxy-1,4-benzoquinol hydroxylase</fullName>
    </alternativeName>
</protein>
<dbReference type="EC" id="1.14.99.60" evidence="1"/>
<dbReference type="EMBL" id="CR628337">
    <property type="protein sequence ID" value="CAH14259.1"/>
    <property type="molecule type" value="Genomic_DNA"/>
</dbReference>
<dbReference type="RefSeq" id="WP_011214319.1">
    <property type="nucleotide sequence ID" value="NC_006369.1"/>
</dbReference>
<dbReference type="SMR" id="Q5X0J0"/>
<dbReference type="GeneID" id="57034034"/>
<dbReference type="KEGG" id="lpf:lpl0029"/>
<dbReference type="LegioList" id="lpl0029"/>
<dbReference type="HOGENOM" id="CLU_088601_0_0_6"/>
<dbReference type="UniPathway" id="UPA00232"/>
<dbReference type="Proteomes" id="UP000002517">
    <property type="component" value="Chromosome"/>
</dbReference>
<dbReference type="GO" id="GO:0005886">
    <property type="term" value="C:plasma membrane"/>
    <property type="evidence" value="ECO:0007669"/>
    <property type="project" value="UniProtKB-SubCell"/>
</dbReference>
<dbReference type="GO" id="GO:0008682">
    <property type="term" value="F:3-demethoxyubiquinol 3-hydroxylase activity"/>
    <property type="evidence" value="ECO:0007669"/>
    <property type="project" value="UniProtKB-EC"/>
</dbReference>
<dbReference type="GO" id="GO:0046872">
    <property type="term" value="F:metal ion binding"/>
    <property type="evidence" value="ECO:0007669"/>
    <property type="project" value="UniProtKB-KW"/>
</dbReference>
<dbReference type="GO" id="GO:0006744">
    <property type="term" value="P:ubiquinone biosynthetic process"/>
    <property type="evidence" value="ECO:0007669"/>
    <property type="project" value="UniProtKB-UniRule"/>
</dbReference>
<dbReference type="CDD" id="cd01042">
    <property type="entry name" value="DMQH"/>
    <property type="match status" value="1"/>
</dbReference>
<dbReference type="Gene3D" id="1.20.1260.10">
    <property type="match status" value="1"/>
</dbReference>
<dbReference type="HAMAP" id="MF_01658">
    <property type="entry name" value="COQ7"/>
    <property type="match status" value="1"/>
</dbReference>
<dbReference type="InterPro" id="IPR047809">
    <property type="entry name" value="COQ7_proteobact"/>
</dbReference>
<dbReference type="InterPro" id="IPR012347">
    <property type="entry name" value="Ferritin-like"/>
</dbReference>
<dbReference type="InterPro" id="IPR009078">
    <property type="entry name" value="Ferritin-like_SF"/>
</dbReference>
<dbReference type="InterPro" id="IPR011566">
    <property type="entry name" value="Ubq_synth_Coq7"/>
</dbReference>
<dbReference type="NCBIfam" id="NF033656">
    <property type="entry name" value="DMQ_monoox_COQ7"/>
    <property type="match status" value="1"/>
</dbReference>
<dbReference type="PANTHER" id="PTHR11237:SF4">
    <property type="entry name" value="5-DEMETHOXYUBIQUINONE HYDROXYLASE, MITOCHONDRIAL"/>
    <property type="match status" value="1"/>
</dbReference>
<dbReference type="PANTHER" id="PTHR11237">
    <property type="entry name" value="COENZYME Q10 BIOSYNTHESIS PROTEIN 7"/>
    <property type="match status" value="1"/>
</dbReference>
<dbReference type="Pfam" id="PF03232">
    <property type="entry name" value="COQ7"/>
    <property type="match status" value="1"/>
</dbReference>
<dbReference type="SUPFAM" id="SSF47240">
    <property type="entry name" value="Ferritin-like"/>
    <property type="match status" value="1"/>
</dbReference>
<comment type="function">
    <text evidence="1">Catalyzes the hydroxylation of 2-nonaprenyl-3-methyl-6-methoxy-1,4-benzoquinol during ubiquinone biosynthesis.</text>
</comment>
<comment type="catalytic activity">
    <reaction evidence="1">
        <text>a 5-methoxy-2-methyl-3-(all-trans-polyprenyl)benzene-1,4-diol + AH2 + O2 = a 3-demethylubiquinol + A + H2O</text>
        <dbReference type="Rhea" id="RHEA:50908"/>
        <dbReference type="Rhea" id="RHEA-COMP:10859"/>
        <dbReference type="Rhea" id="RHEA-COMP:10914"/>
        <dbReference type="ChEBI" id="CHEBI:13193"/>
        <dbReference type="ChEBI" id="CHEBI:15377"/>
        <dbReference type="ChEBI" id="CHEBI:15379"/>
        <dbReference type="ChEBI" id="CHEBI:17499"/>
        <dbReference type="ChEBI" id="CHEBI:84167"/>
        <dbReference type="ChEBI" id="CHEBI:84422"/>
        <dbReference type="EC" id="1.14.99.60"/>
    </reaction>
</comment>
<comment type="cofactor">
    <cofactor evidence="1">
        <name>Fe cation</name>
        <dbReference type="ChEBI" id="CHEBI:24875"/>
    </cofactor>
    <text evidence="1">Binds 2 iron ions per subunit.</text>
</comment>
<comment type="pathway">
    <text evidence="1">Cofactor biosynthesis; ubiquinone biosynthesis.</text>
</comment>
<comment type="subcellular location">
    <subcellularLocation>
        <location evidence="1">Cell membrane</location>
        <topology evidence="1">Peripheral membrane protein</topology>
    </subcellularLocation>
</comment>
<comment type="similarity">
    <text evidence="1">Belongs to the COQ7 family.</text>
</comment>